<reference key="1">
    <citation type="journal article" date="1997" name="FEBS Lett.">
        <title>Tissue-specific subunit of the mouse cytosolic chaperonin-containing TCP-1.</title>
        <authorList>
            <person name="Kubota H."/>
            <person name="Hynes G.M."/>
            <person name="Kerr S.M."/>
            <person name="Willison K.R."/>
        </authorList>
    </citation>
    <scope>NUCLEOTIDE SEQUENCE [MRNA]</scope>
    <source>
        <strain>129/Sv</strain>
        <tissue>Testis</tissue>
    </source>
</reference>
<reference key="2">
    <citation type="journal article" date="1999" name="Eur. J. Biochem.">
        <title>Structures and co-regulated expression of the genes encoding mouse cytosolic chaperonin CCT subunits.</title>
        <authorList>
            <person name="Kubota H."/>
            <person name="Yokota S."/>
            <person name="Yanagi H."/>
            <person name="Yura T."/>
        </authorList>
    </citation>
    <scope>NUCLEOTIDE SEQUENCE [GENOMIC DNA]</scope>
    <source>
        <strain>129/Sv</strain>
    </source>
</reference>
<reference key="3">
    <citation type="journal article" date="2010" name="Cell">
        <title>A tissue-specific atlas of mouse protein phosphorylation and expression.</title>
        <authorList>
            <person name="Huttlin E.L."/>
            <person name="Jedrychowski M.P."/>
            <person name="Elias J.E."/>
            <person name="Goswami T."/>
            <person name="Rad R."/>
            <person name="Beausoleil S.A."/>
            <person name="Villen J."/>
            <person name="Haas W."/>
            <person name="Sowa M.E."/>
            <person name="Gygi S.P."/>
        </authorList>
    </citation>
    <scope>IDENTIFICATION BY MASS SPECTROMETRY [LARGE SCALE ANALYSIS]</scope>
    <source>
        <tissue>Testis</tissue>
    </source>
</reference>
<proteinExistence type="evidence at protein level"/>
<comment type="function">
    <text evidence="1">Component of the chaperonin-containing T-complex (TRiC), a molecular chaperone complex that assists the folding of proteins upon ATP hydrolysis.</text>
</comment>
<comment type="subunit">
    <text evidence="1">Component of the chaperonin-containing T-complex (TRiC), a heterooligomeric complex of about 850 to 900 kDa that forms two stacked rings, 12 to 16 nm in diameter.</text>
</comment>
<comment type="subcellular location">
    <subcellularLocation>
        <location evidence="1">Cytoplasm</location>
    </subcellularLocation>
</comment>
<comment type="tissue specificity">
    <text>Testis specific.</text>
</comment>
<comment type="similarity">
    <text evidence="2">Belongs to the TCP-1 chaperonin family.</text>
</comment>
<gene>
    <name type="primary">Cct6b</name>
</gene>
<protein>
    <recommendedName>
        <fullName>T-complex protein 1 subunit zeta-2</fullName>
        <shortName>TCP-1-zeta-2</shortName>
    </recommendedName>
    <alternativeName>
        <fullName>CCT-zeta-2</fullName>
        <shortName>Cctz-2</shortName>
    </alternativeName>
</protein>
<sequence>MAAIKIANPGAEVTRSQAALAVNICAARGLQDVLRPTLGPKGALKMLVSGAGDIKLTKDGNVLLHEMQIQHPTASIIAKVAAAQDHVTGDGTTSNVLIIGELLKQADLYISEGLHPRIITEGFDVAKTKALEVLDEIKVQKEMKREILLDVARTSLQTKVHAELADILTEAVVDSVLAIRRPGVPIDLFMVEIVEMRHKSETDTQLIRGLVLDHGARHPRMRKQVRDAYILTCNVSLEYEKTEVSSGFFYKTVEEKEKLVKAERKFIEDRVQKIIDLKQKVCAESNKGFVVINQKGIDPVSLEMLAKHNIVALRRAKRRNLERLTLACGGLAVNSFEGLSEECLGHAGLVFEYALGEEKFTFIEDCVNPLSVTLLVKGPNKHTLIQIKDALRDGLRAVKNAIEDGCVVPGAGAVEVAIAEALVNYKHRVQGRVRLGIQAFADALLIIPKVLAQNSGYDLQETLIKIQTKHAESKELLGIDLNTGEPMAAAEAGIWDNYCVKKHLLHSCTVIATNILLVDEIMRAGMSSLRD</sequence>
<accession>Q61390</accession>
<accession>Q9R1U2</accession>
<dbReference type="EMBL" id="Z50192">
    <property type="protein sequence ID" value="CAA90574.1"/>
    <property type="molecule type" value="mRNA"/>
</dbReference>
<dbReference type="EMBL" id="AB022086">
    <property type="protein sequence ID" value="BAA81891.1"/>
    <property type="molecule type" value="Genomic_DNA"/>
</dbReference>
<dbReference type="CCDS" id="CCDS25145.1"/>
<dbReference type="RefSeq" id="NP_033969.2">
    <property type="nucleotide sequence ID" value="NM_009839.4"/>
</dbReference>
<dbReference type="SMR" id="Q61390"/>
<dbReference type="BioGRID" id="198570">
    <property type="interactions" value="8"/>
</dbReference>
<dbReference type="CORUM" id="Q61390"/>
<dbReference type="FunCoup" id="Q61390">
    <property type="interactions" value="1277"/>
</dbReference>
<dbReference type="IntAct" id="Q61390">
    <property type="interactions" value="1"/>
</dbReference>
<dbReference type="STRING" id="10090.ENSMUSP00000021040"/>
<dbReference type="iPTMnet" id="Q61390"/>
<dbReference type="PhosphoSitePlus" id="Q61390"/>
<dbReference type="SwissPalm" id="Q61390"/>
<dbReference type="jPOST" id="Q61390"/>
<dbReference type="PaxDb" id="10090-ENSMUSP00000021040"/>
<dbReference type="ProteomicsDB" id="263266"/>
<dbReference type="Pumba" id="Q61390"/>
<dbReference type="Antibodypedia" id="27366">
    <property type="antibodies" value="132 antibodies from 24 providers"/>
</dbReference>
<dbReference type="DNASU" id="12467"/>
<dbReference type="Ensembl" id="ENSMUST00000021040.10">
    <property type="protein sequence ID" value="ENSMUSP00000021040.4"/>
    <property type="gene ID" value="ENSMUSG00000020698.12"/>
</dbReference>
<dbReference type="GeneID" id="12467"/>
<dbReference type="KEGG" id="mmu:12467"/>
<dbReference type="UCSC" id="uc007kmx.3">
    <property type="organism name" value="mouse"/>
</dbReference>
<dbReference type="AGR" id="MGI:1329013"/>
<dbReference type="CTD" id="10693"/>
<dbReference type="MGI" id="MGI:1329013">
    <property type="gene designation" value="Cct6b"/>
</dbReference>
<dbReference type="VEuPathDB" id="HostDB:ENSMUSG00000020698"/>
<dbReference type="eggNOG" id="KOG0359">
    <property type="taxonomic scope" value="Eukaryota"/>
</dbReference>
<dbReference type="GeneTree" id="ENSGT00940000156339"/>
<dbReference type="HOGENOM" id="CLU_008891_3_1_1"/>
<dbReference type="InParanoid" id="Q61390"/>
<dbReference type="OMA" id="KNAIEDX"/>
<dbReference type="OrthoDB" id="10052040at2759"/>
<dbReference type="PhylomeDB" id="Q61390"/>
<dbReference type="TreeFam" id="TF106333"/>
<dbReference type="Reactome" id="R-MMU-390471">
    <property type="pathway name" value="Association of TriC/CCT with target proteins during biosynthesis"/>
</dbReference>
<dbReference type="Reactome" id="R-MMU-6814122">
    <property type="pathway name" value="Cooperation of PDCL (PhLP1) and TRiC/CCT in G-protein beta folding"/>
</dbReference>
<dbReference type="BioGRID-ORCS" id="12467">
    <property type="hits" value="1 hit in 77 CRISPR screens"/>
</dbReference>
<dbReference type="CD-CODE" id="CE726F99">
    <property type="entry name" value="Postsynaptic density"/>
</dbReference>
<dbReference type="ChiTaRS" id="Cct6b">
    <property type="organism name" value="mouse"/>
</dbReference>
<dbReference type="PRO" id="PR:Q61390"/>
<dbReference type="Proteomes" id="UP000000589">
    <property type="component" value="Chromosome 11"/>
</dbReference>
<dbReference type="RNAct" id="Q61390">
    <property type="molecule type" value="protein"/>
</dbReference>
<dbReference type="Bgee" id="ENSMUSG00000020698">
    <property type="expression patterns" value="Expressed in spermatid and 36 other cell types or tissues"/>
</dbReference>
<dbReference type="ExpressionAtlas" id="Q61390">
    <property type="expression patterns" value="baseline and differential"/>
</dbReference>
<dbReference type="GO" id="GO:0005832">
    <property type="term" value="C:chaperonin-containing T-complex"/>
    <property type="evidence" value="ECO:0000314"/>
    <property type="project" value="MGI"/>
</dbReference>
<dbReference type="GO" id="GO:0005524">
    <property type="term" value="F:ATP binding"/>
    <property type="evidence" value="ECO:0007669"/>
    <property type="project" value="UniProtKB-KW"/>
</dbReference>
<dbReference type="GO" id="GO:0016887">
    <property type="term" value="F:ATP hydrolysis activity"/>
    <property type="evidence" value="ECO:0007669"/>
    <property type="project" value="InterPro"/>
</dbReference>
<dbReference type="GO" id="GO:0140662">
    <property type="term" value="F:ATP-dependent protein folding chaperone"/>
    <property type="evidence" value="ECO:0007669"/>
    <property type="project" value="InterPro"/>
</dbReference>
<dbReference type="GO" id="GO:0051082">
    <property type="term" value="F:unfolded protein binding"/>
    <property type="evidence" value="ECO:0007669"/>
    <property type="project" value="InterPro"/>
</dbReference>
<dbReference type="CDD" id="cd03342">
    <property type="entry name" value="TCP1_zeta"/>
    <property type="match status" value="1"/>
</dbReference>
<dbReference type="FunFam" id="1.10.560.10:FF:000038">
    <property type="entry name" value="Chaperonin containing TCP1 subunit 6B"/>
    <property type="match status" value="1"/>
</dbReference>
<dbReference type="FunFam" id="3.30.260.10:FF:000029">
    <property type="entry name" value="Chaperonin containing TCP1 subunit 6B"/>
    <property type="match status" value="1"/>
</dbReference>
<dbReference type="FunFam" id="1.10.560.10:FF:000058">
    <property type="entry name" value="T-complex protein 1 subunit zeta"/>
    <property type="match status" value="1"/>
</dbReference>
<dbReference type="FunFam" id="3.30.260.10:FF:000017">
    <property type="entry name" value="T-complex protein 1 subunit zeta"/>
    <property type="match status" value="1"/>
</dbReference>
<dbReference type="FunFam" id="3.50.7.10:FF:000004">
    <property type="entry name" value="T-complex protein 1 subunit zeta"/>
    <property type="match status" value="1"/>
</dbReference>
<dbReference type="Gene3D" id="3.50.7.10">
    <property type="entry name" value="GroEL"/>
    <property type="match status" value="1"/>
</dbReference>
<dbReference type="Gene3D" id="1.10.560.10">
    <property type="entry name" value="GroEL-like equatorial domain"/>
    <property type="match status" value="1"/>
</dbReference>
<dbReference type="Gene3D" id="3.30.260.10">
    <property type="entry name" value="TCP-1-like chaperonin intermediate domain"/>
    <property type="match status" value="1"/>
</dbReference>
<dbReference type="InterPro" id="IPR012722">
    <property type="entry name" value="Chap_CCT_zeta"/>
</dbReference>
<dbReference type="InterPro" id="IPR017998">
    <property type="entry name" value="Chaperone_TCP-1"/>
</dbReference>
<dbReference type="InterPro" id="IPR002194">
    <property type="entry name" value="Chaperonin_TCP-1_CS"/>
</dbReference>
<dbReference type="InterPro" id="IPR002423">
    <property type="entry name" value="Cpn60/GroEL/TCP-1"/>
</dbReference>
<dbReference type="InterPro" id="IPR027409">
    <property type="entry name" value="GroEL-like_apical_dom_sf"/>
</dbReference>
<dbReference type="InterPro" id="IPR027413">
    <property type="entry name" value="GROEL-like_equatorial_sf"/>
</dbReference>
<dbReference type="InterPro" id="IPR027410">
    <property type="entry name" value="TCP-1-like_intermed_sf"/>
</dbReference>
<dbReference type="InterPro" id="IPR053374">
    <property type="entry name" value="TCP-1_chaperonin"/>
</dbReference>
<dbReference type="NCBIfam" id="TIGR02347">
    <property type="entry name" value="chap_CCT_zeta"/>
    <property type="match status" value="1"/>
</dbReference>
<dbReference type="NCBIfam" id="NF041083">
    <property type="entry name" value="thermosome_beta"/>
    <property type="match status" value="1"/>
</dbReference>
<dbReference type="PANTHER" id="PTHR11353">
    <property type="entry name" value="CHAPERONIN"/>
    <property type="match status" value="1"/>
</dbReference>
<dbReference type="Pfam" id="PF00118">
    <property type="entry name" value="Cpn60_TCP1"/>
    <property type="match status" value="1"/>
</dbReference>
<dbReference type="PRINTS" id="PR00304">
    <property type="entry name" value="TCOMPLEXTCP1"/>
</dbReference>
<dbReference type="SUPFAM" id="SSF52029">
    <property type="entry name" value="GroEL apical domain-like"/>
    <property type="match status" value="1"/>
</dbReference>
<dbReference type="SUPFAM" id="SSF48592">
    <property type="entry name" value="GroEL equatorial domain-like"/>
    <property type="match status" value="1"/>
</dbReference>
<dbReference type="SUPFAM" id="SSF54849">
    <property type="entry name" value="GroEL-intermediate domain like"/>
    <property type="match status" value="1"/>
</dbReference>
<dbReference type="PROSITE" id="PS00751">
    <property type="entry name" value="TCP1_2"/>
    <property type="match status" value="1"/>
</dbReference>
<dbReference type="PROSITE" id="PS00995">
    <property type="entry name" value="TCP1_3"/>
    <property type="match status" value="1"/>
</dbReference>
<evidence type="ECO:0000250" key="1">
    <source>
        <dbReference type="UniProtKB" id="Q92526"/>
    </source>
</evidence>
<evidence type="ECO:0000305" key="2"/>
<keyword id="KW-0067">ATP-binding</keyword>
<keyword id="KW-0143">Chaperone</keyword>
<keyword id="KW-0963">Cytoplasm</keyword>
<keyword id="KW-0547">Nucleotide-binding</keyword>
<keyword id="KW-1185">Reference proteome</keyword>
<name>TCPW_MOUSE</name>
<organism>
    <name type="scientific">Mus musculus</name>
    <name type="common">Mouse</name>
    <dbReference type="NCBI Taxonomy" id="10090"/>
    <lineage>
        <taxon>Eukaryota</taxon>
        <taxon>Metazoa</taxon>
        <taxon>Chordata</taxon>
        <taxon>Craniata</taxon>
        <taxon>Vertebrata</taxon>
        <taxon>Euteleostomi</taxon>
        <taxon>Mammalia</taxon>
        <taxon>Eutheria</taxon>
        <taxon>Euarchontoglires</taxon>
        <taxon>Glires</taxon>
        <taxon>Rodentia</taxon>
        <taxon>Myomorpha</taxon>
        <taxon>Muroidea</taxon>
        <taxon>Muridae</taxon>
        <taxon>Murinae</taxon>
        <taxon>Mus</taxon>
        <taxon>Mus</taxon>
    </lineage>
</organism>
<feature type="chain" id="PRO_0000128364" description="T-complex protein 1 subunit zeta-2">
    <location>
        <begin position="1"/>
        <end position="531"/>
    </location>
</feature>
<feature type="sequence conflict" description="In Ref. 1; CAA90574." evidence="2" ref="1">
    <original>E</original>
    <variation>K</variation>
    <location>
        <position position="112"/>
    </location>
</feature>